<keyword id="KW-1015">Disulfide bond</keyword>
<keyword id="KW-0301">Gamma-carboxyglutamic acid</keyword>
<keyword id="KW-0379">Hydroxylation</keyword>
<keyword id="KW-0964">Secreted</keyword>
<keyword id="KW-0732">Signal</keyword>
<keyword id="KW-0800">Toxin</keyword>
<sequence length="82" mass="9201">MMAKLMITVMTVFFLSLQQGADGLFERWRKNQMAASRIMGNLITARLDPPGYCTHKICYEDGECNQWCTAGCNPDTGKCDTT</sequence>
<dbReference type="SMR" id="P0C846"/>
<dbReference type="GO" id="GO:0005576">
    <property type="term" value="C:extracellular region"/>
    <property type="evidence" value="ECO:0007669"/>
    <property type="project" value="UniProtKB-SubCell"/>
</dbReference>
<dbReference type="GO" id="GO:0090729">
    <property type="term" value="F:toxin activity"/>
    <property type="evidence" value="ECO:0007669"/>
    <property type="project" value="UniProtKB-KW"/>
</dbReference>
<dbReference type="InterPro" id="IPR026210">
    <property type="entry name" value="Toxin_Pg"/>
</dbReference>
<dbReference type="PRINTS" id="PR02080">
    <property type="entry name" value="TOXINPGFAMLY"/>
</dbReference>
<protein>
    <recommendedName>
        <fullName evidence="3">Turripeptide Gsg9.1</fullName>
    </recommendedName>
</protein>
<reference key="1">
    <citation type="journal article" date="2008" name="Toxicon">
        <title>A rapidly diverging superfamily of peptide toxins in venomous Gemmula species.</title>
        <authorList>
            <person name="Heralde F.M. III"/>
            <person name="Imperial J."/>
            <person name="Bandyopadhyay P.K."/>
            <person name="Olivera B.M."/>
            <person name="Concepcion G.P."/>
            <person name="Santos A.D."/>
        </authorList>
    </citation>
    <scope>NUCLEOTIDE SEQUENCE [MRNA]</scope>
    <source>
        <tissue>Venom duct</tissue>
    </source>
</reference>
<feature type="signal peptide" evidence="2">
    <location>
        <begin position="1"/>
        <end position="23"/>
    </location>
</feature>
<feature type="propeptide" id="PRO_0000346144" evidence="1">
    <location>
        <begin position="24"/>
        <end position="46"/>
    </location>
</feature>
<feature type="peptide" id="PRO_0000346145" description="Turripeptide Gsg9.1">
    <location>
        <begin position="47"/>
        <end position="82"/>
    </location>
</feature>
<feature type="modified residue" description="4-hydroxyproline" evidence="1">
    <location>
        <position position="49"/>
    </location>
</feature>
<feature type="modified residue" description="4-hydroxyproline" evidence="1">
    <location>
        <position position="50"/>
    </location>
</feature>
<feature type="modified residue" description="4-carboxyglutamate" evidence="1">
    <location>
        <position position="60"/>
    </location>
</feature>
<feature type="modified residue" description="4-carboxyglutamate" evidence="1">
    <location>
        <position position="63"/>
    </location>
</feature>
<feature type="disulfide bond" evidence="1">
    <location>
        <begin position="53"/>
        <end position="68"/>
    </location>
</feature>
<feature type="disulfide bond" evidence="1">
    <location>
        <begin position="58"/>
        <end position="72"/>
    </location>
</feature>
<feature type="disulfide bond" evidence="1">
    <location>
        <begin position="64"/>
        <end position="79"/>
    </location>
</feature>
<comment type="subcellular location">
    <subcellularLocation>
        <location evidence="5">Secreted</location>
    </subcellularLocation>
</comment>
<comment type="tissue specificity">
    <text evidence="5">Expressed by the venom duct.</text>
</comment>
<comment type="domain">
    <text evidence="4">The cysteine framework is IX (C-C-C-C-C-C).</text>
</comment>
<comment type="similarity">
    <text evidence="4">Belongs to the Pg turripeptide superfamily.</text>
</comment>
<name>C91_GEMSO</name>
<evidence type="ECO:0000250" key="1"/>
<evidence type="ECO:0000255" key="2"/>
<evidence type="ECO:0000303" key="3">
    <source>
    </source>
</evidence>
<evidence type="ECO:0000305" key="4"/>
<evidence type="ECO:0000305" key="5">
    <source>
    </source>
</evidence>
<organism>
    <name type="scientific">Gemmula sogodensis</name>
    <name type="common">Gem-turris</name>
    <dbReference type="NCBI Taxonomy" id="439591"/>
    <lineage>
        <taxon>Eukaryota</taxon>
        <taxon>Metazoa</taxon>
        <taxon>Spiralia</taxon>
        <taxon>Lophotrochozoa</taxon>
        <taxon>Mollusca</taxon>
        <taxon>Gastropoda</taxon>
        <taxon>Caenogastropoda</taxon>
        <taxon>Neogastropoda</taxon>
        <taxon>Conoidea</taxon>
        <taxon>Turridae</taxon>
        <taxon>Gemmula</taxon>
    </lineage>
</organism>
<proteinExistence type="inferred from homology"/>
<accession>P0C846</accession>